<feature type="chain" id="PRO_1000166193" description="Large ribosomal subunit protein bL25">
    <location>
        <begin position="1"/>
        <end position="95"/>
    </location>
</feature>
<name>RL25_GLAP5</name>
<keyword id="KW-1185">Reference proteome</keyword>
<keyword id="KW-0687">Ribonucleoprotein</keyword>
<keyword id="KW-0689">Ribosomal protein</keyword>
<keyword id="KW-0694">RNA-binding</keyword>
<keyword id="KW-0699">rRNA-binding</keyword>
<proteinExistence type="inferred from homology"/>
<reference key="1">
    <citation type="journal article" date="2009" name="J. Bacteriol.">
        <title>Complete genome sequence of Haemophilus parasuis SH0165.</title>
        <authorList>
            <person name="Yue M."/>
            <person name="Yang F."/>
            <person name="Yang J."/>
            <person name="Bei W."/>
            <person name="Cai X."/>
            <person name="Chen L."/>
            <person name="Dong J."/>
            <person name="Zhou R."/>
            <person name="Jin M."/>
            <person name="Jin Q."/>
            <person name="Chen H."/>
        </authorList>
    </citation>
    <scope>NUCLEOTIDE SEQUENCE [LARGE SCALE GENOMIC DNA]</scope>
    <source>
        <strain>SH0165</strain>
    </source>
</reference>
<accession>B8F4P6</accession>
<protein>
    <recommendedName>
        <fullName evidence="1">Large ribosomal subunit protein bL25</fullName>
    </recommendedName>
    <alternativeName>
        <fullName evidence="2">50S ribosomal protein L25</fullName>
    </alternativeName>
</protein>
<dbReference type="EMBL" id="CP001321">
    <property type="protein sequence ID" value="ACL32298.1"/>
    <property type="molecule type" value="Genomic_DNA"/>
</dbReference>
<dbReference type="RefSeq" id="WP_010786718.1">
    <property type="nucleotide sequence ID" value="NC_011852.1"/>
</dbReference>
<dbReference type="SMR" id="B8F4P6"/>
<dbReference type="STRING" id="557723.HAPS_0650"/>
<dbReference type="KEGG" id="hap:HAPS_0650"/>
<dbReference type="PATRIC" id="fig|557723.8.peg.652"/>
<dbReference type="HOGENOM" id="CLU_137946_0_0_6"/>
<dbReference type="Proteomes" id="UP000006743">
    <property type="component" value="Chromosome"/>
</dbReference>
<dbReference type="GO" id="GO:0022625">
    <property type="term" value="C:cytosolic large ribosomal subunit"/>
    <property type="evidence" value="ECO:0007669"/>
    <property type="project" value="TreeGrafter"/>
</dbReference>
<dbReference type="GO" id="GO:0008097">
    <property type="term" value="F:5S rRNA binding"/>
    <property type="evidence" value="ECO:0007669"/>
    <property type="project" value="InterPro"/>
</dbReference>
<dbReference type="GO" id="GO:0003735">
    <property type="term" value="F:structural constituent of ribosome"/>
    <property type="evidence" value="ECO:0007669"/>
    <property type="project" value="InterPro"/>
</dbReference>
<dbReference type="GO" id="GO:0006412">
    <property type="term" value="P:translation"/>
    <property type="evidence" value="ECO:0007669"/>
    <property type="project" value="UniProtKB-UniRule"/>
</dbReference>
<dbReference type="CDD" id="cd00495">
    <property type="entry name" value="Ribosomal_L25_TL5_CTC"/>
    <property type="match status" value="1"/>
</dbReference>
<dbReference type="FunFam" id="2.40.240.10:FF:000002">
    <property type="entry name" value="50S ribosomal protein L25"/>
    <property type="match status" value="1"/>
</dbReference>
<dbReference type="Gene3D" id="2.40.240.10">
    <property type="entry name" value="Ribosomal Protein L25, Chain P"/>
    <property type="match status" value="1"/>
</dbReference>
<dbReference type="HAMAP" id="MF_01336">
    <property type="entry name" value="Ribosomal_bL25"/>
    <property type="match status" value="1"/>
</dbReference>
<dbReference type="InterPro" id="IPR020056">
    <property type="entry name" value="Rbsml_bL25/Gln-tRNA_synth_N"/>
</dbReference>
<dbReference type="InterPro" id="IPR011035">
    <property type="entry name" value="Ribosomal_bL25/Gln-tRNA_synth"/>
</dbReference>
<dbReference type="InterPro" id="IPR020055">
    <property type="entry name" value="Ribosomal_bL25_short"/>
</dbReference>
<dbReference type="InterPro" id="IPR029751">
    <property type="entry name" value="Ribosomal_L25_dom"/>
</dbReference>
<dbReference type="InterPro" id="IPR020930">
    <property type="entry name" value="Ribosomal_uL5_bac-type"/>
</dbReference>
<dbReference type="NCBIfam" id="NF004612">
    <property type="entry name" value="PRK05943.1"/>
    <property type="match status" value="1"/>
</dbReference>
<dbReference type="PANTHER" id="PTHR33284">
    <property type="entry name" value="RIBOSOMAL PROTEIN L25/GLN-TRNA SYNTHETASE, ANTI-CODON-BINDING DOMAIN-CONTAINING PROTEIN"/>
    <property type="match status" value="1"/>
</dbReference>
<dbReference type="PANTHER" id="PTHR33284:SF1">
    <property type="entry name" value="RIBOSOMAL PROTEIN L25_GLN-TRNA SYNTHETASE, ANTI-CODON-BINDING DOMAIN-CONTAINING PROTEIN"/>
    <property type="match status" value="1"/>
</dbReference>
<dbReference type="Pfam" id="PF01386">
    <property type="entry name" value="Ribosomal_L25p"/>
    <property type="match status" value="1"/>
</dbReference>
<dbReference type="SUPFAM" id="SSF50715">
    <property type="entry name" value="Ribosomal protein L25-like"/>
    <property type="match status" value="1"/>
</dbReference>
<organism>
    <name type="scientific">Glaesserella parasuis serovar 5 (strain SH0165)</name>
    <name type="common">Haemophilus parasuis</name>
    <dbReference type="NCBI Taxonomy" id="557723"/>
    <lineage>
        <taxon>Bacteria</taxon>
        <taxon>Pseudomonadati</taxon>
        <taxon>Pseudomonadota</taxon>
        <taxon>Gammaproteobacteria</taxon>
        <taxon>Pasteurellales</taxon>
        <taxon>Pasteurellaceae</taxon>
        <taxon>Glaesserella</taxon>
    </lineage>
</organism>
<sequence length="95" mass="10616">MSFKFEAEVRSAQGKGASRRLRHNGQVPAIIYGGKAEAVSIILDHDKVNNAQAHDAFYNEVLTIVVAGKEEQVKVQAIQRHPTKPKLVHLDFKRI</sequence>
<evidence type="ECO:0000255" key="1">
    <source>
        <dbReference type="HAMAP-Rule" id="MF_01336"/>
    </source>
</evidence>
<evidence type="ECO:0000305" key="2"/>
<comment type="function">
    <text evidence="1">This is one of the proteins that binds to the 5S RNA in the ribosome where it forms part of the central protuberance.</text>
</comment>
<comment type="subunit">
    <text evidence="1">Part of the 50S ribosomal subunit; part of the 5S rRNA/L5/L18/L25 subcomplex. Contacts the 5S rRNA. Binds to the 5S rRNA independently of L5 and L18.</text>
</comment>
<comment type="similarity">
    <text evidence="1">Belongs to the bacterial ribosomal protein bL25 family.</text>
</comment>
<gene>
    <name evidence="1" type="primary">rplY</name>
    <name type="ordered locus">HAPS_0650</name>
</gene>